<organism>
    <name type="scientific">Human immunodeficiency virus type 1 group M subtype B (isolate HXB2)</name>
    <name type="common">HIV-1</name>
    <dbReference type="NCBI Taxonomy" id="11706"/>
    <lineage>
        <taxon>Viruses</taxon>
        <taxon>Riboviria</taxon>
        <taxon>Pararnavirae</taxon>
        <taxon>Artverviricota</taxon>
        <taxon>Revtraviricetes</taxon>
        <taxon>Ortervirales</taxon>
        <taxon>Retroviridae</taxon>
        <taxon>Orthoretrovirinae</taxon>
        <taxon>Lentivirus</taxon>
        <taxon>Human immunodeficiency virus type 1</taxon>
    </lineage>
</organism>
<feature type="initiator methionine" description="Removed; by host" evidence="1">
    <location>
        <position position="1"/>
    </location>
</feature>
<feature type="chain" id="PRO_0000261216" description="Gag polyprotein">
    <location>
        <begin position="2"/>
        <end position="500"/>
    </location>
</feature>
<feature type="chain" id="PRO_0000038593" description="Matrix protein p17" evidence="1">
    <location>
        <begin position="2"/>
        <end position="132"/>
    </location>
</feature>
<feature type="chain" id="PRO_0000038594" description="Capsid protein p24" evidence="1">
    <location>
        <begin position="133"/>
        <end position="363"/>
    </location>
</feature>
<feature type="peptide" id="PRO_0000038595" description="Spacer peptide 1" evidence="1">
    <location>
        <begin position="364"/>
        <end position="377"/>
    </location>
</feature>
<feature type="chain" id="PRO_0000038596" description="Nucleocapsid protein p7" evidence="1">
    <location>
        <begin position="378"/>
        <end position="432"/>
    </location>
</feature>
<feature type="peptide" id="PRO_0000038597" description="Spacer peptide 2" evidence="1">
    <location>
        <begin position="433"/>
        <end position="448"/>
    </location>
</feature>
<feature type="chain" id="PRO_0000038598" description="p6-gag" evidence="1">
    <location>
        <begin position="449"/>
        <end position="500"/>
    </location>
</feature>
<feature type="zinc finger region" description="CCHC-type 1" evidence="7">
    <location>
        <begin position="390"/>
        <end position="407"/>
    </location>
</feature>
<feature type="zinc finger region" description="CCHC-type 2" evidence="7">
    <location>
        <begin position="411"/>
        <end position="428"/>
    </location>
</feature>
<feature type="region of interest" description="Interaction with Gp41" evidence="5">
    <location>
        <begin position="7"/>
        <end position="31"/>
    </location>
</feature>
<feature type="region of interest" description="Interaction with host CALM1" evidence="24">
    <location>
        <begin position="8"/>
        <end position="43"/>
    </location>
</feature>
<feature type="region of interest" description="Interaction with host AP3D1" evidence="6">
    <location>
        <begin position="12"/>
        <end position="19"/>
    </location>
</feature>
<feature type="region of interest" description="Interaction with membrane phosphatidylinositol 4,5-bisphosphate and RNA" evidence="5">
    <location>
        <begin position="14"/>
        <end position="33"/>
    </location>
</feature>
<feature type="region of interest" description="Interaction with membrane phosphatidylinositol 4,5-bisphosphate" evidence="5">
    <location>
        <begin position="73"/>
        <end position="77"/>
    </location>
</feature>
<feature type="region of interest" description="Disordered" evidence="8">
    <location>
        <begin position="106"/>
        <end position="128"/>
    </location>
</feature>
<feature type="region of interest" description="Interaction with host PPIA/CYPA and NUP153" evidence="5">
    <location>
        <begin position="189"/>
        <end position="227"/>
    </location>
</feature>
<feature type="region of interest" description="PPIA/CYPA-binding loop">
    <location>
        <begin position="217"/>
        <end position="225"/>
    </location>
</feature>
<feature type="region of interest" description="Dimerization/Multimerization of capsid protein p24">
    <location>
        <begin position="277"/>
        <end position="363"/>
    </location>
</feature>
<feature type="region of interest" description="Disordered" evidence="8">
    <location>
        <begin position="444"/>
        <end position="500"/>
    </location>
</feature>
<feature type="short sequence motif" description="Nuclear export signal">
    <location>
        <begin position="16"/>
        <end position="22"/>
    </location>
</feature>
<feature type="short sequence motif" description="Nuclear localization signal">
    <location>
        <begin position="26"/>
        <end position="32"/>
    </location>
</feature>
<feature type="short sequence motif" description="PTAP/PSAP motif">
    <location>
        <begin position="455"/>
        <end position="458"/>
    </location>
</feature>
<feature type="short sequence motif" description="LYPX(n)L motif">
    <location>
        <begin position="483"/>
        <end position="492"/>
    </location>
</feature>
<feature type="site" description="Cleavage; by viral protease" evidence="1">
    <location>
        <begin position="132"/>
        <end position="133"/>
    </location>
</feature>
<feature type="site" description="Cleavage; by viral protease" evidence="1">
    <location>
        <begin position="363"/>
        <end position="364"/>
    </location>
</feature>
<feature type="site" description="Cleavage; by viral protease" evidence="1">
    <location>
        <begin position="377"/>
        <end position="378"/>
    </location>
</feature>
<feature type="site" description="Cleavage; by viral protease" evidence="1">
    <location>
        <begin position="432"/>
        <end position="433"/>
    </location>
</feature>
<feature type="site" description="Cleavage; by viral protease" evidence="1">
    <location>
        <begin position="448"/>
        <end position="449"/>
    </location>
</feature>
<feature type="modified residue" description="Phosphoserine; by host MAPK1" evidence="5">
    <location>
        <position position="148"/>
    </location>
</feature>
<feature type="modified residue" description="Asymmetric dimethylarginine; in Nucleocapsid protein p7; by host PRMT6" evidence="1">
    <location>
        <position position="387"/>
    </location>
</feature>
<feature type="modified residue" description="Asymmetric dimethylarginine; in Nucleocapsid protein p7; by host PRMT6" evidence="1">
    <location>
        <position position="409"/>
    </location>
</feature>
<feature type="lipid moiety-binding region" description="N-myristoyl glycine; by host" evidence="1">
    <location>
        <position position="2"/>
    </location>
</feature>
<feature type="mutagenesis site" description="No influence on the PIP2- or concentration-dependent myristyl switch mechanism." evidence="15">
    <original>S</original>
    <variation>D</variation>
    <location>
        <position position="6"/>
    </location>
</feature>
<feature type="mutagenesis site" description="No influence on the PIP2- or concentration-dependent myristyl switch mechanism." evidence="15">
    <original>S</original>
    <variation>D</variation>
    <location>
        <position position="9"/>
    </location>
</feature>
<feature type="mutagenesis site" description="Replication-defective, induces nuclear mislocalization of matrix protein; when associated with G-22." evidence="9">
    <original>K</original>
    <variation>A</variation>
    <location>
        <position position="18"/>
    </location>
</feature>
<feature type="mutagenesis site" description="Replication-defective, induces nuclear mislocalization of matrix protein; when associated with A-18." evidence="9">
    <original>R</original>
    <variation>G</variation>
    <location>
        <position position="22"/>
    </location>
</feature>
<feature type="mutagenesis site" description="No effect on subcellular localization of matrix protein; when associated with A-18 and G-22." evidence="9">
    <original>K</original>
    <variation>A</variation>
    <location>
        <position position="27"/>
    </location>
</feature>
<feature type="mutagenesis site" description="No influence on the PIP2- or concentration-dependent myristyl switch mechanism." evidence="15">
    <original>S</original>
    <variation>D</variation>
    <location>
        <position position="67"/>
    </location>
</feature>
<feature type="mutagenesis site" description="No influence on the PIP2- or concentration-dependent myristyl switch mechanism." evidence="15">
    <original>S</original>
    <variation>D</variation>
    <location>
        <position position="72"/>
    </location>
</feature>
<feature type="mutagenesis site" description="Increased interaction with human NONO." evidence="26">
    <original>Q</original>
    <variation>Y</variation>
    <location>
        <position position="182"/>
    </location>
</feature>
<feature type="mutagenesis site" description="3-fold decrease of PPIA-binding affinity." evidence="28">
    <original>P</original>
    <variation>A</variation>
    <location>
        <position position="217"/>
    </location>
</feature>
<feature type="mutagenesis site" description="2.7-fold decrease of PPIA-binding affinity." evidence="28">
    <original>V</original>
    <variation>A</variation>
    <location>
        <position position="218"/>
    </location>
</feature>
<feature type="mutagenesis site" description="8-fold decrease of PPIA-binding affinity." evidence="28">
    <original>H</original>
    <variation>A</variation>
    <variation>Q</variation>
    <location>
        <position position="219"/>
    </location>
</feature>
<feature type="mutagenesis site" description="44-fold decrease of PPIA-binding affinity." evidence="28">
    <original>A</original>
    <variation>G</variation>
    <location>
        <position position="220"/>
    </location>
</feature>
<feature type="mutagenesis site" description="3.4-fold decrease of PPIA-binding affinity." evidence="28">
    <original>A</original>
    <variation>V</variation>
    <location>
        <position position="220"/>
    </location>
</feature>
<feature type="mutagenesis site" description="31-fold decrease of PPIA-binding affinity." evidence="28">
    <original>G</original>
    <variation>A</variation>
    <location>
        <position position="221"/>
    </location>
</feature>
<feature type="mutagenesis site" description="154-fold decrease of PPIA-binding affinity." evidence="28">
    <original>G</original>
    <variation>V</variation>
    <location>
        <position position="221"/>
    </location>
</feature>
<feature type="mutagenesis site" description="36-fold decrease of PPIA-binding affinity." evidence="28">
    <original>P</original>
    <variation>A</variation>
    <location>
        <position position="222"/>
    </location>
</feature>
<feature type="mutagenesis site" description="More than 150-fold decrease of PPIA-binding affinity." evidence="28">
    <original>P</original>
    <variation>V</variation>
    <location>
        <position position="222"/>
    </location>
</feature>
<feature type="mutagenesis site" description="1.2-fold decrease of PPIA-binding affinity." evidence="28">
    <original>I</original>
    <variation>A</variation>
    <location>
        <position position="223"/>
    </location>
</feature>
<feature type="mutagenesis site" description="1.0-fold decrease of PPIA-binding affinity." evidence="28">
    <original>I</original>
    <variation>V</variation>
    <location>
        <position position="223"/>
    </location>
</feature>
<feature type="mutagenesis site" description="2.3-fold decrease of PPIA-binding affinity." evidence="28">
    <original>A</original>
    <variation>G</variation>
    <location>
        <position position="224"/>
    </location>
</feature>
<feature type="mutagenesis site" description="1.7-fold decrease of PPIA-binding affinity." evidence="28">
    <original>A</original>
    <variation>V</variation>
    <location>
        <position position="224"/>
    </location>
</feature>
<feature type="mutagenesis site" description="1.6-fold decrease of PPIA-binding affinity." evidence="28">
    <original>P</original>
    <variation>A</variation>
    <location>
        <position position="225"/>
    </location>
</feature>
<feature type="mutagenesis site" description="Strongly decreased interaction with human NONO." evidence="26">
    <original>DI</original>
    <variation>AA</variation>
    <location>
        <begin position="235"/>
        <end position="236"/>
    </location>
</feature>
<feature type="mutagenesis site" description="Decreases infectivity and replication." evidence="13">
    <original>N</original>
    <variation>F</variation>
    <variation>G</variation>
    <location>
        <position position="394"/>
    </location>
</feature>
<feature type="mutagenesis site" description="Complete loss of infectivity and in vitro chaperone activity." evidence="11">
    <original>H</original>
    <variation>C</variation>
    <location>
        <position position="400"/>
    </location>
</feature>
<feature type="mutagenesis site" description="Complete loss of infectivity and DNA synthesis." evidence="11">
    <original>C</original>
    <variation>H</variation>
    <location>
        <position position="405"/>
    </location>
</feature>
<feature type="mutagenesis site" description="Partial loss of infectivity. Complete loss of in vitro chaperone activity." evidence="11">
    <original>H</original>
    <variation>C</variation>
    <location>
        <position position="421"/>
    </location>
</feature>
<feature type="mutagenesis site" description="Partial loss of infectivity." evidence="11">
    <original>C</original>
    <variation>H</variation>
    <location>
        <position position="426"/>
    </location>
</feature>
<feature type="helix" evidence="31">
    <location>
        <begin position="149"/>
        <end position="162"/>
    </location>
</feature>
<feature type="helix" evidence="31">
    <location>
        <begin position="168"/>
        <end position="175"/>
    </location>
</feature>
<feature type="turn" evidence="31">
    <location>
        <begin position="176"/>
        <end position="178"/>
    </location>
</feature>
<feature type="helix" evidence="31">
    <location>
        <begin position="181"/>
        <end position="189"/>
    </location>
</feature>
<feature type="helix" evidence="31">
    <location>
        <begin position="195"/>
        <end position="215"/>
    </location>
</feature>
<feature type="strand" evidence="31">
    <location>
        <begin position="225"/>
        <end position="227"/>
    </location>
</feature>
<feature type="helix" evidence="31">
    <location>
        <begin position="233"/>
        <end position="236"/>
    </location>
</feature>
<feature type="helix" evidence="31">
    <location>
        <begin position="243"/>
        <end position="251"/>
    </location>
</feature>
<feature type="strand" evidence="31">
    <location>
        <begin position="252"/>
        <end position="254"/>
    </location>
</feature>
<feature type="helix" evidence="31">
    <location>
        <begin position="258"/>
        <end position="276"/>
    </location>
</feature>
<feature type="helix" evidence="31">
    <location>
        <begin position="282"/>
        <end position="284"/>
    </location>
</feature>
<feature type="helix" evidence="31">
    <location>
        <begin position="293"/>
        <end position="306"/>
    </location>
</feature>
<feature type="helix" evidence="31">
    <location>
        <begin position="311"/>
        <end position="324"/>
    </location>
</feature>
<feature type="helix" evidence="31">
    <location>
        <begin position="328"/>
        <end position="337"/>
    </location>
</feature>
<feature type="helix" evidence="31">
    <location>
        <begin position="343"/>
        <end position="349"/>
    </location>
</feature>
<feature type="turn" evidence="31">
    <location>
        <begin position="350"/>
        <end position="354"/>
    </location>
</feature>
<feature type="helix" evidence="31">
    <location>
        <begin position="356"/>
        <end position="371"/>
    </location>
</feature>
<accession>P04591</accession>
<organismHost>
    <name type="scientific">Homo sapiens</name>
    <name type="common">Human</name>
    <dbReference type="NCBI Taxonomy" id="9606"/>
</organismHost>
<proteinExistence type="evidence at protein level"/>
<comment type="function">
    <molecule>Gag polyprotein</molecule>
    <text evidence="22">Mediates, with Gag-Pol polyprotein, the essential events in virion assembly, including binding the plasma membrane, making the protein-protein interactions necessary to create spherical particles, recruiting the viral Env proteins, and packaging the genomic RNA via direct interactions with the RNA packaging sequence (Psi).</text>
</comment>
<comment type="function">
    <molecule>Matrix protein p17</molecule>
    <text evidence="1 5">Targets the polyprotein to the plasma membrane via a multipartite membrane-binding signal, that includes its myristoylated N-terminus (By similarity). Matrix protein is part of the pre-integration complex. Implicated in the release from host cell mediated by Vpu. Binds to RNA (By similarity).</text>
</comment>
<comment type="function">
    <molecule>Capsid protein p24</molecule>
    <text evidence="5 12 19 23 25 26 27">Forms the conical core that encapsulates the genomic RNA-nucleocapsid complex in the virion. Most core are conical, with only 7% tubular (PubMed:19914170, PubMed:8648689). The core is constituted by capsid protein hexamer subunits (PubMed:19914170, PubMed:8648689). The core is disassembled soon after virion entry (PubMed:12660176). The capsid promotes immune invasion by cloaking viral DNA from CGAS detection (PubMed:30270045). Host restriction factors such as host TRIM5-alpha or TRIMCyp bind retroviral capsids and cause premature capsid disassembly, leading to blocks in reverse transcription (PubMed:23785198). Capsid restriction by TRIM5 is one of the factors which restricts HIV-1 to the human species (PubMed:23785198). Host PIN1 apparently facilitates the virion uncoating (By similarity). On the other hand, interactions with PDZD8 or CYPA stabilize the capsid (PubMed:24554657).</text>
</comment>
<comment type="function">
    <molecule>Nucleocapsid protein p7</molecule>
    <text evidence="10 11 14 16 22 29">Encapsulates and protects viral dimeric unspliced genomic RNA (gRNA). Binds these RNAs through its zinc fingers. Acts as a nucleic acid chaperone which is involved in rearangement of nucleic acid secondary structure during gRNA retrotranscription. Also facilitates template switch leading to recombination. As part of the polyprotein, participates in gRNA dimerization, packaging, tRNA incorporation and virion assembly.</text>
</comment>
<comment type="function">
    <molecule>p6-gag</molecule>
    <text evidence="5">Plays a role in budding of the assembled particle by interacting with the host class E VPS proteins TSG101 and PDCD6IP/AIP1.</text>
</comment>
<comment type="subunit">
    <molecule>Gag polyprotein</molecule>
    <text evidence="4 17 20 21">Homotrimer; further assembles as hexamers of trimers (By similarity). Oligomerization possibly creates a central hole into which the cytoplasmic tail of the gp41 envelope protein may be inserted. Interacts with host TRIM22; this interaction seems to disrupt proper trafficking of Gag polyprotein and may interfere with budding (PubMed:18389079). Interacts with host PDZD8 (PubMed:20573829). When ubiquitinated, interacts (via p6-gag domain) with host PACSIN2; this interaction allows PACSIN2 recruitment to viral assembly sites and its subsequent incorporation into virions (By similarity). Interacts with MOV10 (PubMed:20215113).</text>
</comment>
<comment type="subunit">
    <molecule>Matrix protein p17</molecule>
    <text evidence="5 18 24">Homotrimer; further assembles as hexamers of trimers (PubMed:19327811). Interacts with gp41 (via C-terminus) (By similarity). Interacts with host CALM1; this interaction induces a conformational change in the Matrix protein, triggering exposure of the myristate group (PubMed:24500712). Interacts with host AP3D1; this interaction allows the polyprotein trafficking to multivesicular bodies during virus assembly (By similarity). Part of the pre-integration complex (PIC) which is composed of viral genome, matrix protein, Vpr and integrase (By similarity).</text>
</comment>
<comment type="subunit">
    <molecule>Capsid protein p24</molecule>
    <text evidence="5 19 21 23 26 28">Homodimer; the homodimer further multimerizes as homohexamers or homopentamers (PubMed:19914170). Interacts with host NUP98 (By similarity). Interacts with host PPIA/CYPA; this interaction stabilizes the capsid (PubMed:9223641). Interacts with host NUP153 (By similarity). Interacts with host PDZD8; this interaction stabilizes the capsid (PubMed:20573829). Interacts with host TRIM5; this interaction destabilizes the capsid (PubMed:23785198). Interacts with host CPSF6 (By similarity). Interacts with host NONO; the interaction is weak (PubMed:30270045).</text>
</comment>
<comment type="subunit">
    <molecule>Nucleocapsid protein p7</molecule>
    <text evidence="5">Interacts with host NUP98.</text>
</comment>
<comment type="subunit">
    <molecule>p6-gag</molecule>
    <text evidence="3 5">Interacts with Vpr; this interaction allows Vpr incorporation into the virion (By similarity). Interacts with host TSG101 (By similarity). Interacts with host PDCD6IP/AIP1 (By similarity).</text>
</comment>
<comment type="interaction">
    <interactant intactId="EBI-6163428">
        <id>P04591</id>
    </interactant>
    <interactant intactId="EBI-6163446">
        <id>Q9HD40</id>
        <label>SEPSECS</label>
    </interactant>
    <organismsDiffer>true</organismsDiffer>
    <experiments>3</experiments>
</comment>
<comment type="interaction">
    <interactant intactId="EBI-6163428">
        <id>P04591</id>
    </interactant>
    <interactant intactId="EBI-358189">
        <id>O95793-2</id>
        <label>STAU1</label>
    </interactant>
    <organismsDiffer>true</organismsDiffer>
    <experiments>4</experiments>
</comment>
<comment type="interaction">
    <interactant intactId="EBI-6179719">
        <id>PRO_0000038593</id>
    </interactant>
    <interactant intactId="EBI-1045802">
        <id>Q12904</id>
        <label>AIMP1</label>
    </interactant>
    <organismsDiffer>true</organismsDiffer>
    <experiments>3</experiments>
</comment>
<comment type="interaction">
    <interactant intactId="EBI-6179719">
        <id>PRO_0000038593</id>
    </interactant>
    <interactant intactId="EBI-745226">
        <id>Q13155</id>
        <label>AIMP2</label>
    </interactant>
    <organismsDiffer>true</organismsDiffer>
    <experiments>3</experiments>
</comment>
<comment type="interaction">
    <interactant intactId="EBI-6179719">
        <id>PRO_0000038593</id>
    </interactant>
    <interactant intactId="EBI-1048486">
        <id>O43324</id>
        <label>EEF1E1</label>
    </interactant>
    <organismsDiffer>true</organismsDiffer>
    <experiments>4</experiments>
</comment>
<comment type="interaction">
    <interactant intactId="EBI-6179719">
        <id>PRO_0000038593</id>
    </interactant>
    <interactant intactId="EBI-396155">
        <id>Q14978</id>
        <label>NOLC1</label>
    </interactant>
    <organismsDiffer>true</organismsDiffer>
    <experiments>2</experiments>
</comment>
<comment type="interaction">
    <interactant intactId="EBI-6179719">
        <id>PRO_0000038593</id>
    </interactant>
    <interactant intactId="EBI-766468">
        <id>Q9NTK5</id>
        <label>OLA1</label>
    </interactant>
    <organismsDiffer>true</organismsDiffer>
    <experiments>4</experiments>
</comment>
<comment type="interaction">
    <interactant intactId="EBI-6179719">
        <id>PRO_0000038593</id>
    </interactant>
    <interactant intactId="EBI-1047850">
        <id>Q86SQ7</id>
        <label>SDCCAG8</label>
    </interactant>
    <organismsDiffer>true</organismsDiffer>
    <experiments>2</experiments>
</comment>
<comment type="interaction">
    <interactant intactId="EBI-6179719">
        <id>PRO_0000038593</id>
    </interactant>
    <interactant intactId="EBI-6163446">
        <id>Q9HD40</id>
        <label>SEPSECS</label>
    </interactant>
    <organismsDiffer>true</organismsDiffer>
    <experiments>5</experiments>
</comment>
<comment type="interaction">
    <interactant intactId="EBI-9871255">
        <id>PRO_0000038594</id>
    </interactant>
    <interactant intactId="EBI-358189">
        <id>O95793-2</id>
        <label>STAU1</label>
    </interactant>
    <organismsDiffer>true</organismsDiffer>
    <experiments>2</experiments>
</comment>
<comment type="interaction">
    <interactant intactId="EBI-6179727">
        <id>PRO_0000038596</id>
    </interactant>
    <interactant intactId="EBI-3937546">
        <id>Q9UI47</id>
        <label>CTNNA3</label>
    </interactant>
    <organismsDiffer>true</organismsDiffer>
    <experiments>2</experiments>
</comment>
<comment type="interaction">
    <interactant intactId="EBI-6179727">
        <id>PRO_0000038596</id>
    </interactant>
    <interactant intactId="EBI-2509921">
        <id>Q8N1G4</id>
        <label>LRRC47</label>
    </interactant>
    <organismsDiffer>true</organismsDiffer>
    <experiments>2</experiments>
</comment>
<comment type="interaction">
    <interactant intactId="EBI-6179727">
        <id>PRO_0000038596</id>
    </interactant>
    <interactant intactId="EBI-5453723">
        <id>Q9Y3B7</id>
        <label>MRPL11</label>
    </interactant>
    <organismsDiffer>true</organismsDiffer>
    <experiments>3</experiments>
</comment>
<comment type="interaction">
    <interactant intactId="EBI-6179727">
        <id>PRO_0000038596</id>
    </interactant>
    <interactant intactId="EBI-78738">
        <id>Q99873</id>
        <label>PRMT1</label>
    </interactant>
    <organismsDiffer>true</organismsDiffer>
    <experiments>2</experiments>
</comment>
<comment type="interaction">
    <interactant intactId="EBI-6179727">
        <id>PRO_0000038596</id>
    </interactant>
    <interactant intactId="EBI-712228">
        <id>P55769</id>
        <label>SNU13</label>
    </interactant>
    <organismsDiffer>true</organismsDiffer>
    <experiments>2</experiments>
</comment>
<comment type="interaction">
    <interactant intactId="EBI-6179727">
        <id>PRO_0000038596</id>
    </interactant>
    <interactant intactId="EBI-2849837">
        <id>Q7Z739</id>
        <label>YTHDF3</label>
    </interactant>
    <organismsDiffer>true</organismsDiffer>
    <experiments>2</experiments>
</comment>
<comment type="interaction">
    <interactant intactId="EBI-10634977">
        <id>PRO_0000038598</id>
    </interactant>
    <interactant intactId="EBI-772361">
        <id>P80318</id>
        <label>Cct3</label>
    </interactant>
    <organismsDiffer>true</organismsDiffer>
    <experiments>3</experiments>
</comment>
<comment type="interaction">
    <interactant intactId="EBI-10634977">
        <id>PRO_0000038598</id>
    </interactant>
    <interactant intactId="EBI-15891993">
        <id>Q99816-1</id>
        <label>TSG101</label>
    </interactant>
    <organismsDiffer>true</organismsDiffer>
    <experiments>3</experiments>
</comment>
<comment type="subcellular location">
    <molecule>Gag polyprotein</molecule>
    <subcellularLocation>
        <location>Host cell membrane</location>
        <topology>Lipid-anchor</topology>
    </subcellularLocation>
    <subcellularLocation>
        <location evidence="5">Host endosome</location>
        <location evidence="5">Host multivesicular body</location>
    </subcellularLocation>
    <text evidence="5">These locations are probably linked to virus assembly sites. The main location is the cell membrane, but under some circumstances, late endosomal compartments can serve as productive sites for virion assembly.</text>
</comment>
<comment type="subcellular location">
    <molecule>Matrix protein p17</molecule>
    <subcellularLocation>
        <location>Virion membrane</location>
        <topology evidence="30">Lipid-anchor</topology>
    </subcellularLocation>
    <subcellularLocation>
        <location evidence="1">Host nucleus</location>
    </subcellularLocation>
    <subcellularLocation>
        <location evidence="1">Host cytoplasm</location>
    </subcellularLocation>
</comment>
<comment type="subcellular location">
    <molecule>Capsid protein p24</molecule>
    <subcellularLocation>
        <location evidence="30">Virion</location>
    </subcellularLocation>
</comment>
<comment type="subcellular location">
    <molecule>Nucleocapsid protein p7</molecule>
    <subcellularLocation>
        <location evidence="30">Virion</location>
    </subcellularLocation>
</comment>
<comment type="alternative products">
    <event type="ribosomal frameshifting"/>
    <isoform>
        <id>P04591-1</id>
        <name>Gag polyprotein</name>
        <sequence type="displayed"/>
    </isoform>
    <isoform>
        <id>P04585-1</id>
        <name>Gag-Pol polyprotein</name>
        <sequence type="external"/>
    </isoform>
    <text>Translation results in the formation of the Gag polyprotein most of the time. Ribosomal frameshifting at the gag-pol genes boundary occurs at low frequency and produces the Gag-Pol polyprotein. This strategy of translation probably allows the virus to modulate the quantity of each viral protein. Maintenance of a correct Gag to Gag-Pol ratio is essential for RNA dimerization and viral infectivity.</text>
</comment>
<comment type="domain">
    <text evidence="5">Late-budding domains (L domains) are short sequence motifs essential for viral particle budding. They recruit proteins of the host ESCRT machinery (Endosomal Sorting Complex Required for Transport) or ESCRT-associated proteins. p6-gag contains two L domains: a PTAP/PSAP motif, which interacts with the UEV domain of TSG101 and a LYPX(n)L motif which interacts with PDCD6IP/AIP1.</text>
</comment>
<comment type="PTM">
    <text evidence="5">Gag-Pol polyprotein: Specific enzymatic cleavages by the viral protease yield mature proteins.</text>
</comment>
<comment type="PTM">
    <molecule>Matrix protein p17</molecule>
    <text evidence="15">Tyrosine phosphorylated presumably in the virion by a host kinase. Phosphorylation is apparently not a major regulator of membrane association (PubMed:17656588).</text>
</comment>
<comment type="PTM">
    <molecule>Capsid protein p24</molecule>
    <text evidence="5">Phosphorylated possibly by host MAPK1; this phosphorylation is necessary for Pin1-mediated virion uncoating.</text>
</comment>
<comment type="PTM">
    <molecule>Nucleocapsid protein p7</molecule>
    <text evidence="2">Methylated by host PRMT6, impairing its function by reducing RNA annealing and the initiation of reverse transcription.</text>
</comment>
<comment type="miscellaneous">
    <text>HIV-1 lineages are divided in three main groups, M (for Major), O (for Outlier), and N (for New, or Non-M, Non-O). The vast majority of strains found worldwide belong to the group M. Group O seems to be endemic to and largely confined to Cameroon and neighboring countries in West Central Africa, where these viruses represent a small minority of HIV-1 strains. The group N is represented by a limited number of isolates from Cameroonian persons. The group M is further subdivided in 9 clades or subtypes (A to D, F to H, J and K).</text>
</comment>
<comment type="miscellaneous">
    <molecule>Isoform Gag polyprotein</molecule>
    <text>Produced by conventional translation.</text>
</comment>
<comment type="similarity">
    <text evidence="30">Belongs to the primate lentivirus group gag polyprotein family.</text>
</comment>
<sequence length="500" mass="55930">MGARASVLSGGELDRWEKIRLRPGGKKKYKLKHIVWASRELERFAVNPGLLETSEGCRQILGQLQPSLQTGSEELRSLYNTVATLYCVHQRIEIKDTKEALDKIEEEQNKSKKKAQQAAADTGHSNQVSQNYPIVQNIQGQMVHQAISPRTLNAWVKVVEEKAFSPEVIPMFSALSEGATPQDLNTMLNTVGGHQAAMQMLKETINEEAAEWDRVHPVHAGPIAPGQMREPRGSDIAGTTSTLQEQIGWMTNNPPIPVGEIYKRWIILGLNKIVRMYSPTSILDIRQGPKEPFRDYVDRFYKTLRAEQASQEVKNWMTETLLVQNANPDCKTILKALGPAATLEEMMTACQGVGGPGHKARVLAEAMSQVTNSATIMMQRGNFRNQRKIVKCFNCGKEGHTARNCRAPRKKGCWKCGKEGHQMKDCTERQANFLGKIWPSYKGRPGNFLQSRPEPTAPPEESFRSGVETTTPPQKQEPIDKELYPLTSLRSLFGNDPSSQ</sequence>
<keyword id="KW-0002">3D-structure</keyword>
<keyword id="KW-0014">AIDS</keyword>
<keyword id="KW-0167">Capsid protein</keyword>
<keyword id="KW-1032">Host cell membrane</keyword>
<keyword id="KW-1035">Host cytoplasm</keyword>
<keyword id="KW-1039">Host endosome</keyword>
<keyword id="KW-1043">Host membrane</keyword>
<keyword id="KW-1048">Host nucleus</keyword>
<keyword id="KW-0945">Host-virus interaction</keyword>
<keyword id="KW-0449">Lipoprotein</keyword>
<keyword id="KW-0472">Membrane</keyword>
<keyword id="KW-0479">Metal-binding</keyword>
<keyword id="KW-0488">Methylation</keyword>
<keyword id="KW-0519">Myristate</keyword>
<keyword id="KW-0597">Phosphoprotein</keyword>
<keyword id="KW-1185">Reference proteome</keyword>
<keyword id="KW-0677">Repeat</keyword>
<keyword id="KW-0688">Ribosomal frameshifting</keyword>
<keyword id="KW-0694">RNA-binding</keyword>
<keyword id="KW-1198">Viral budding</keyword>
<keyword id="KW-1187">Viral budding via the host ESCRT complexes</keyword>
<keyword id="KW-0543">Viral nucleoprotein</keyword>
<keyword id="KW-1188">Viral release from host cell</keyword>
<keyword id="KW-0946">Virion</keyword>
<keyword id="KW-0862">Zinc</keyword>
<keyword id="KW-0863">Zinc-finger</keyword>
<gene>
    <name type="primary">gag</name>
</gene>
<name>GAG_HV1H2</name>
<reference key="1">
    <citation type="journal article" date="1987" name="AIDS Res. Hum. Retroviruses">
        <title>Complete nucleotide sequences of functional clones of the AIDS virus.</title>
        <authorList>
            <person name="Ratner L."/>
            <person name="Fisher A."/>
            <person name="Jagodzinski L.L."/>
            <person name="Mitsuya H."/>
            <person name="Liou R.-S."/>
            <person name="Gallo R.C."/>
            <person name="Wong-Staal F."/>
        </authorList>
    </citation>
    <scope>NUCLEOTIDE SEQUENCE [GENOMIC RNA]</scope>
</reference>
<reference key="2">
    <citation type="journal article" date="1996" name="J. Virol.">
        <title>Cyclophilin A is required for an early step in the life cycle of human immunodeficiency virus type 1 before the initiation of reverse transcription.</title>
        <authorList>
            <person name="Braaten D."/>
            <person name="Franke E.K."/>
            <person name="Luban J."/>
        </authorList>
    </citation>
    <scope>FUNCTION (CAPSID PROTEIN P24)</scope>
</reference>
<reference key="3">
    <citation type="journal article" date="1997" name="J. Mol. Biol.">
        <title>Molecular recognition in the HIV-1 capsid/cyclophilin A complex.</title>
        <authorList>
            <person name="Yoo S."/>
            <person name="Myszka D.G."/>
            <person name="Yeh C."/>
            <person name="McMurray M."/>
            <person name="Hill C.P."/>
            <person name="Sundquist W.I."/>
        </authorList>
    </citation>
    <scope>MUTAGENESIS OF PRO-217; VAL-218; HIS-219; ALA-220; GLY-221; PRO-222; ILE-223; ALA-224 AND PRO-225</scope>
    <scope>INTERACTION WITH HUMAN CYPA</scope>
</reference>
<reference key="4">
    <citation type="journal article" date="1999" name="Nature">
        <title>A novel nuclear export activity in HIV-1 matrix protein required for viral replication.</title>
        <authorList>
            <person name="Dupont S."/>
            <person name="Sharova N."/>
            <person name="DeHoratius C."/>
            <person name="Virbasius C.M."/>
            <person name="Zhu X."/>
            <person name="Bukrinskaya A.G."/>
            <person name="Stevenson M."/>
            <person name="Green M.R."/>
        </authorList>
    </citation>
    <scope>MUTAGENESIS OF LYS-18; ARG-22 AND LYS-27</scope>
</reference>
<reference key="5">
    <citation type="journal article" date="1999" name="J. Mol. Biol.">
        <title>Recombination during reverse transcription: an evaluation of the role of the nucleocapsid protein.</title>
        <authorList>
            <person name="Negroni M."/>
            <person name="Buc H."/>
        </authorList>
    </citation>
    <scope>FUNCTION (NUCLEOCAPSID PROTEIN P7)</scope>
</reference>
<reference key="6">
    <citation type="journal article" date="2000" name="J. Virol.">
        <title>Roles of Pr55(gag) and NCp7 in tRNA(3)(Lys) genomic placement and the initiation step of reverse transcription in human immunodeficiency virus type 1.</title>
        <authorList>
            <person name="Cen S."/>
            <person name="Khorchid A."/>
            <person name="Gabor J."/>
            <person name="Rong L."/>
            <person name="Wainberg M.A."/>
            <person name="Kleiman L."/>
        </authorList>
    </citation>
    <scope>FUNCTION (NUCLEOCAPSID PROTEIN P7)</scope>
</reference>
<reference key="7">
    <citation type="journal article" date="2001" name="J. Virol.">
        <title>Maintenance of the Gag/Gag-Pol ratio is important for human immunodeficiency virus type 1 RNA dimerization and viral infectivity.</title>
        <authorList>
            <person name="Shehu-Xhilaga M."/>
            <person name="Crowe S.M."/>
            <person name="Mak J."/>
        </authorList>
    </citation>
    <scope>GAG/GAG-POL RATIO</scope>
</reference>
<reference key="8">
    <citation type="journal article" date="2002" name="Proc. Natl. Acad. Sci. U.S.A.">
        <title>Catalysis of cis/trans isomerization in native HIV-1 capsid by human cyclophilin A.</title>
        <authorList>
            <person name="Bosco D.A."/>
            <person name="Eisenmesser E.Z."/>
            <person name="Pochapsky S."/>
            <person name="Sundquist W.I."/>
            <person name="Kern D."/>
        </authorList>
    </citation>
    <scope>CIS/TRANS ISOMERIZATION (CAPSID PROTEIN P24)</scope>
</reference>
<reference key="9">
    <citation type="journal article" date="2002" name="J. Virol.">
        <title>Subtle alterations of the native zinc finger structures have dramatic effects on the nucleic acid chaperone activity of human immunodeficiency virus type 1 nucleocapsid protein.</title>
        <authorList>
            <person name="Guo J."/>
            <person name="Wu T."/>
            <person name="Kane B.F."/>
            <person name="Johnson D.G."/>
            <person name="Henderson L.E."/>
            <person name="Gorelick R.J."/>
            <person name="Levin J.G."/>
        </authorList>
    </citation>
    <scope>FUNCTION (NUCLEOCAPSID PROTEIN P7)</scope>
    <scope>MUTAGENESIS OF HIS-400; CYS-405; HIS-421 AND CYS-426</scope>
</reference>
<reference key="10">
    <citation type="journal article" date="2003" name="EMBO J.">
        <title>Structural organization of authentic, mature HIV-1 virions and cores.</title>
        <authorList>
            <person name="Briggs J.A."/>
            <person name="Wilk T."/>
            <person name="Welker R."/>
            <person name="Krausslich H.G."/>
            <person name="Fuller S.D."/>
        </authorList>
    </citation>
    <scope>FUNCTION (CAPSID PROTEIN P24)</scope>
    <scope>QUATERNARY STRUCTURE (CAPSID PROTEIN P24)</scope>
</reference>
<reference key="11">
    <citation type="journal article" date="2004" name="Biochemistry">
        <title>In vitro processing of HIV-1 nucleocapsid protein by the viral proteinase: effects of amino acid substitutions at the scissile bond in the proximal zinc finger sequence.</title>
        <authorList>
            <person name="Tozser J."/>
            <person name="Shulenin S."/>
            <person name="Louis J.M."/>
            <person name="Copeland T.D."/>
            <person name="Oroszlan S."/>
        </authorList>
    </citation>
    <scope>CLEAVAGE (NUCLEOCAPSID PROTEIN P7)</scope>
</reference>
<reference key="12">
    <citation type="journal article" date="2006" name="Virology">
        <title>Characterization of human immunodeficiency virus type 1 (HIV-1) containing mutations in the nucleocapsid protein at a putative HIV-1 protease cleavage site.</title>
        <authorList>
            <person name="Thomas J.A."/>
            <person name="Shulenin S."/>
            <person name="Coren L.V."/>
            <person name="Bosche W.J."/>
            <person name="Gagliardi T.D."/>
            <person name="Gorelick R.J."/>
            <person name="Oroszlan S."/>
        </authorList>
    </citation>
    <scope>MUTAGENESIS OF ASN-394</scope>
</reference>
<reference key="13">
    <citation type="journal article" date="2007" name="J. Mol. Biol.">
        <title>Dissecting the protein-RNA and RNA-RNA interactions in the nucleocapsid-mediated dimerization and isomerization of HIV-1 stemloop 1.</title>
        <authorList>
            <person name="Hagan N.A."/>
            <person name="Fabris D."/>
        </authorList>
    </citation>
    <scope>FUNCTION (NUCLEOCAPSID PROTEIN P7)</scope>
</reference>
<reference key="14">
    <citation type="journal article" date="2007" name="Protein Sci.">
        <title>Mutations that mimic phosphorylation of the HIV-1 matrix protein do not perturb the myristyl switch.</title>
        <authorList>
            <person name="Saad J.S."/>
            <person name="Kim A."/>
            <person name="Ghanam R.H."/>
            <person name="Dalton A.K."/>
            <person name="Vogt V.M."/>
            <person name="Wu Z."/>
            <person name="Lu W."/>
            <person name="Summers M.F."/>
        </authorList>
    </citation>
    <scope>MUTAGENESIS OF SER-6; SER-9; SER-67 AND SER-72</scope>
    <scope>PHOSPHORYLATION</scope>
</reference>
<reference key="15">
    <citation type="journal article" date="2007" name="J. Virol.">
        <title>Human immunodeficiency virus type 1 matrix protein assembles on membranes as a hexamer.</title>
        <authorList>
            <person name="Alfadhli A."/>
            <person name="Huseby D."/>
            <person name="Kapit E."/>
            <person name="Colman D."/>
            <person name="Barklis E."/>
        </authorList>
    </citation>
    <scope>SUBUNIT (MATRIX PROTEIN P17)</scope>
</reference>
<reference key="16">
    <citation type="journal article" date="2008" name="Virology">
        <title>Mapping of nucleocapsid residues important for HIV-1 genomic RNA dimerization and packaging.</title>
        <authorList>
            <person name="Kafaie J."/>
            <person name="Song R."/>
            <person name="Abrahamyan L."/>
            <person name="Mouland A.J."/>
            <person name="Laughrea M."/>
        </authorList>
    </citation>
    <scope>FUNCTION (NUCLEOCAPSID PROTEIN P7)</scope>
</reference>
<reference key="17">
    <citation type="journal article" date="2008" name="PLoS Pathog.">
        <title>The interferon response inhibits HIV particle production by induction of TRIM22.</title>
        <authorList>
            <person name="Barr S.D."/>
            <person name="Smiley J.R."/>
            <person name="Bushman F.D."/>
        </authorList>
    </citation>
    <scope>INTERACTION WITH HUMAN TRIM22</scope>
</reference>
<reference key="18">
    <citation type="journal article" date="2009" name="Cell">
        <title>Structural convergence between Cryo-EM and NMR reveals intersubunit interactions critical for HIV-1 capsid function.</title>
        <authorList>
            <person name="Byeon I.J."/>
            <person name="Meng X."/>
            <person name="Jung J."/>
            <person name="Zhao G."/>
            <person name="Yang R."/>
            <person name="Ahn J."/>
            <person name="Shi J."/>
            <person name="Concel J."/>
            <person name="Aiken C."/>
            <person name="Zhang P."/>
            <person name="Gronenborn A.M."/>
        </authorList>
    </citation>
    <scope>SUBUNIT (CAPSID PROTEIN P24)</scope>
    <scope>FUNCTION (CAPSID PROTEIN P24)</scope>
</reference>
<reference key="19">
    <citation type="journal article" date="2009" name="Virology">
        <title>HIV-1 matrix organizes as a hexamer of trimers on membranes containing phosphatidylinositol-(4,5)-bisphosphate.</title>
        <authorList>
            <person name="Alfadhli A."/>
            <person name="Barklis R.L."/>
            <person name="Barklis E."/>
        </authorList>
    </citation>
    <scope>SUBUNIT (MATRIX PROTEIN P17)</scope>
</reference>
<reference key="20">
    <citation type="journal article" date="2010" name="Virology">
        <title>Formation of immature and mature genomic RNA dimers in wild-type and protease-inactive HIV-1: differential roles of the Gag polyprotein, nucleocapsid proteins NCp15, NCp9, NCp7, and the dimerization initiation site.</title>
        <authorList>
            <person name="Jalalirad M."/>
            <person name="Laughrea M."/>
        </authorList>
    </citation>
    <scope>FUNCTION (NUCLEOCAPSID PROTEIN P7)</scope>
    <scope>FUNCTION (GAG POLYPROTEIN)</scope>
</reference>
<reference key="21">
    <citation type="journal article" date="2010" name="J. Biol. Chem.">
        <title>Moloney leukemia virus 10 (MOV10) protein inhibits retrovirus replication.</title>
        <authorList>
            <person name="Wang X."/>
            <person name="Han Y."/>
            <person name="Dang Y."/>
            <person name="Fu W."/>
            <person name="Zhou T."/>
            <person name="Ptak R.G."/>
            <person name="Zheng Y.H."/>
        </authorList>
    </citation>
    <scope>INTERACTION WITH HOST MOV10 (GAG POLYPROTEIN)</scope>
</reference>
<reference key="22">
    <citation type="journal article" date="2010" name="J. Virol.">
        <title>PDZD8 is a novel Gag-interacting factor that promotes retroviral infection.</title>
        <authorList>
            <person name="Henning M.S."/>
            <person name="Morham S.G."/>
            <person name="Goff S.P."/>
            <person name="Naghavi M.H."/>
        </authorList>
    </citation>
    <scope>INTERACTION WITH HOST PDZD8 (GAG POLYPROTEIN)</scope>
</reference>
<reference key="23">
    <citation type="journal article" date="2014" name="J. Biol. Chem.">
        <title>Solution structure of calmodulin bound to the binding domain of the HIV-1 matrix protein.</title>
        <authorList>
            <person name="Vlach J."/>
            <person name="Samal A.B."/>
            <person name="Saad J.S."/>
        </authorList>
    </citation>
    <scope>INTERACTION WITH RAT CALM1 (MATRIX PROTEIN P17)</scope>
</reference>
<reference key="24">
    <citation type="journal article" date="2013" name="J. Virol.">
        <title>Retrovirus restriction by TRIM5 proteins requires recognition of only a small fraction of viral capsid subunits.</title>
        <authorList>
            <person name="Shi J."/>
            <person name="Friedman D.B."/>
            <person name="Aiken C."/>
        </authorList>
    </citation>
    <scope>INTERACTION WITH MONKEY TRIM5 (CAPSID PROTEIN P24)</scope>
</reference>
<reference key="25">
    <citation type="journal article" date="2014" name="J. Virol.">
        <title>Contribution of PDZD8 to stabilization of the human immunodeficiency virus type 1 capsid.</title>
        <authorList>
            <person name="Guth C.A."/>
            <person name="Sodroski J."/>
        </authorList>
    </citation>
    <scope>INTERACTION OF CAPSID-NUCLEOCAPSID COMPLEX WITH HUMAN PDZD8</scope>
    <scope>FUNCTION (CAPSID PROTEIN P24)</scope>
</reference>
<reference key="26">
    <citation type="journal article" date="2018" name="Cell">
        <title>NONO detects the nuclear HIV capsid to promote cGAS-mediated innate immune activation.</title>
        <authorList>
            <person name="Lahaye X."/>
            <person name="Gentili M."/>
            <person name="Silvin A."/>
            <person name="Conrad C."/>
            <person name="Picard L."/>
            <person name="Jouve M."/>
            <person name="Zueva E."/>
            <person name="Maurin M."/>
            <person name="Nadalin F."/>
            <person name="Knott G.J."/>
            <person name="Zhao B."/>
            <person name="Du F."/>
            <person name="Rio M."/>
            <person name="Amiel J."/>
            <person name="Fox A.H."/>
            <person name="Li P."/>
            <person name="Etienne L."/>
            <person name="Bond C.S."/>
            <person name="Colleaux L."/>
            <person name="Manel N."/>
        </authorList>
    </citation>
    <scope>FUNCTION (CAPSID PROTEIN P24)</scope>
    <scope>INTERACTION WITH HUMAN NONO (CAPSID PROTEIN P24)</scope>
    <scope>MUTAGENESIS OF GLN-182 AND 235-ASP-ILE-236</scope>
</reference>
<reference key="27">
    <citation type="journal article" date="1999" name="J. Mol. Biol.">
        <title>Structural biology of HIV.</title>
        <authorList>
            <person name="Turner B.G."/>
            <person name="Summers M.F."/>
        </authorList>
    </citation>
    <scope>REVIEW</scope>
</reference>
<reference key="28">
    <citation type="journal article" date="2003" name="Biochim. Biophys. Acta">
        <title>Role of HIV-1 Gag domains in viral assembly.</title>
        <authorList>
            <person name="Scarlata S."/>
            <person name="Carter C."/>
        </authorList>
    </citation>
    <scope>REVIEW</scope>
</reference>
<reference key="29">
    <citation type="journal article" date="2006" name="Curr. Opin. Microbiol.">
        <title>Cyclophilin, TRIM5, and innate immunity to HIV-1.</title>
        <authorList>
            <person name="Sokolskaja E."/>
            <person name="Luban J."/>
        </authorList>
    </citation>
    <scope>REVIEW</scope>
</reference>
<reference key="30">
    <citation type="journal article" date="2011" name="J. Mol. Biol.">
        <title>Molecular determinants that regulate plasma membrane association of HIV-1 Gag.</title>
        <authorList>
            <person name="Chukkapalli V."/>
            <person name="Ono A."/>
        </authorList>
    </citation>
    <scope>REVIEW</scope>
</reference>
<reference key="31">
    <citation type="journal article" date="2014" name="Virus Res.">
        <title>Retrospective on the all-in-one retroviral nucleocapsid protein.</title>
        <authorList>
            <person name="Darlix J.L."/>
            <person name="de Rocquigny H."/>
            <person name="Mauffret O."/>
            <person name="Mely Y."/>
        </authorList>
    </citation>
    <scope>REVIEW</scope>
</reference>
<reference key="32">
    <citation type="journal article" date="2014" name="Trends Microbiol.">
        <title>The role of matrix in HIV-1 envelope glycoprotein incorporation.</title>
        <authorList>
            <person name="Tedbury P.R."/>
            <person name="Freed E.O."/>
        </authorList>
    </citation>
    <scope>REVIEW</scope>
</reference>
<dbReference type="EMBL" id="K03455">
    <property type="protein sequence ID" value="AAB50258.1"/>
    <property type="molecule type" value="Genomic_RNA"/>
</dbReference>
<dbReference type="RefSeq" id="NP_057850.1">
    <property type="nucleotide sequence ID" value="NC_001802.1"/>
</dbReference>
<dbReference type="PDB" id="1TSQ">
    <property type="method" value="X-ray"/>
    <property type="resolution" value="2.00 A"/>
    <property type="chains" value="P=429-438"/>
</dbReference>
<dbReference type="PDB" id="1TSU">
    <property type="method" value="X-ray"/>
    <property type="resolution" value="2.10 A"/>
    <property type="chains" value="P=429-436"/>
</dbReference>
<dbReference type="PDB" id="5FJB">
    <property type="method" value="EM"/>
    <property type="resolution" value="9.00 A"/>
    <property type="chains" value="A/B=133-350"/>
</dbReference>
<dbReference type="PDB" id="5I1R">
    <property type="method" value="Other"/>
    <property type="chains" value="A=378-432"/>
</dbReference>
<dbReference type="PDB" id="5INC">
    <property type="method" value="X-ray"/>
    <property type="resolution" value="2.88 A"/>
    <property type="chains" value="E/F=308-316"/>
</dbReference>
<dbReference type="PDB" id="5IND">
    <property type="method" value="X-ray"/>
    <property type="resolution" value="2.13 A"/>
    <property type="chains" value="E/F=308-316"/>
</dbReference>
<dbReference type="PDB" id="5NME">
    <property type="method" value="X-ray"/>
    <property type="resolution" value="2.94 A"/>
    <property type="chains" value="C/H=77-85"/>
</dbReference>
<dbReference type="PDB" id="5NMF">
    <property type="method" value="X-ray"/>
    <property type="resolution" value="2.89 A"/>
    <property type="chains" value="C/H=77-85"/>
</dbReference>
<dbReference type="PDB" id="5NMG">
    <property type="method" value="X-ray"/>
    <property type="resolution" value="2.75 A"/>
    <property type="chains" value="C/H=77-85"/>
</dbReference>
<dbReference type="PDB" id="5NMH">
    <property type="method" value="X-ray"/>
    <property type="resolution" value="1.55 A"/>
    <property type="chains" value="C=77-85"/>
</dbReference>
<dbReference type="PDB" id="5NMK">
    <property type="method" value="X-ray"/>
    <property type="resolution" value="1.66 A"/>
    <property type="chains" value="C=77-85"/>
</dbReference>
<dbReference type="PDB" id="6CPL">
    <property type="method" value="X-ray"/>
    <property type="resolution" value="2.45 A"/>
    <property type="chains" value="C=293-312"/>
</dbReference>
<dbReference type="PDB" id="6CPN">
    <property type="method" value="X-ray"/>
    <property type="resolution" value="2.00 A"/>
    <property type="chains" value="C=299-311"/>
</dbReference>
<dbReference type="PDB" id="6CPO">
    <property type="method" value="X-ray"/>
    <property type="resolution" value="2.40 A"/>
    <property type="chains" value="C/F=299-311"/>
</dbReference>
<dbReference type="PDB" id="6CQJ">
    <property type="method" value="X-ray"/>
    <property type="resolution" value="2.75 A"/>
    <property type="chains" value="C/F/I=299-311"/>
</dbReference>
<dbReference type="PDB" id="6CQL">
    <property type="method" value="X-ray"/>
    <property type="resolution" value="2.40 A"/>
    <property type="chains" value="C=299-311"/>
</dbReference>
<dbReference type="PDB" id="6CQN">
    <property type="method" value="X-ray"/>
    <property type="resolution" value="2.50 A"/>
    <property type="chains" value="C=299-311"/>
</dbReference>
<dbReference type="PDB" id="6CQQ">
    <property type="method" value="X-ray"/>
    <property type="resolution" value="2.80 A"/>
    <property type="chains" value="C/H=299-311"/>
</dbReference>
<dbReference type="PDB" id="6CQR">
    <property type="method" value="X-ray"/>
    <property type="resolution" value="3.04 A"/>
    <property type="chains" value="C/H=299-311"/>
</dbReference>
<dbReference type="PDB" id="6EC2">
    <property type="method" value="X-ray"/>
    <property type="resolution" value="3.40 A"/>
    <property type="chains" value="A/C/F/G=133-363"/>
</dbReference>
<dbReference type="PDB" id="6ECN">
    <property type="method" value="X-ray"/>
    <property type="resolution" value="3.40 A"/>
    <property type="chains" value="A/B/D/E=133-363"/>
</dbReference>
<dbReference type="PDB" id="6ECO">
    <property type="method" value="X-ray"/>
    <property type="resolution" value="4.20 A"/>
    <property type="chains" value="A=133-358, D=133-353"/>
</dbReference>
<dbReference type="PDB" id="6N3J">
    <property type="method" value="EM"/>
    <property type="resolution" value="3.00 A"/>
    <property type="chains" value="A/B/C/D/E/F=278-377"/>
</dbReference>
<dbReference type="PDB" id="6N3U">
    <property type="method" value="EM"/>
    <property type="resolution" value="2.90 A"/>
    <property type="chains" value="A/B/C/D/E/F=278-377"/>
</dbReference>
<dbReference type="PDB" id="6ZDJ">
    <property type="method" value="EM"/>
    <property type="resolution" value="5.80 A"/>
    <property type="chains" value="A/B/C/D/G/H/N/Y/d/e/j/k=133-352"/>
</dbReference>
<dbReference type="PDB" id="7ASH">
    <property type="method" value="EM"/>
    <property type="resolution" value="4.20 A"/>
    <property type="chains" value="A/B/C/D/E/F/G/H/I/J/K/L/M/N/O/P/Q/R=146-378"/>
</dbReference>
<dbReference type="PDB" id="7ASL">
    <property type="method" value="EM"/>
    <property type="resolution" value="4.50 A"/>
    <property type="chains" value="A/B/C/D/E/F/G/H/I/J/K/L/M/N/O/P/Q/R=143-377"/>
</dbReference>
<dbReference type="PDB" id="7WJ2">
    <property type="method" value="X-ray"/>
    <property type="resolution" value="1.28 A"/>
    <property type="chains" value="C=78-85"/>
</dbReference>
<dbReference type="PDB" id="9CWV">
    <property type="method" value="EM"/>
    <property type="resolution" value="2.42 A"/>
    <property type="chains" value="A/B/C/D/E/F/G/H/I/J/K/L/M/N/O/P/Q/R=144-374"/>
</dbReference>
<dbReference type="PDB" id="9D6C">
    <property type="method" value="EM"/>
    <property type="resolution" value="2.10 A"/>
    <property type="chains" value="A/B/C/D/E/F/G/H/I/J/K/L/M/N/O/P/Q/R=141-372"/>
</dbReference>
<dbReference type="PDB" id="9DWD">
    <property type="method" value="EM"/>
    <property type="resolution" value="3.13 A"/>
    <property type="chains" value="A/B/C/D/E/F/G/H/I/J/K/L/M/N/O/P/Q/R=141-372"/>
</dbReference>
<dbReference type="PDBsum" id="1TSQ"/>
<dbReference type="PDBsum" id="1TSU"/>
<dbReference type="PDBsum" id="5FJB"/>
<dbReference type="PDBsum" id="5I1R"/>
<dbReference type="PDBsum" id="5INC"/>
<dbReference type="PDBsum" id="5IND"/>
<dbReference type="PDBsum" id="5NME"/>
<dbReference type="PDBsum" id="5NMF"/>
<dbReference type="PDBsum" id="5NMG"/>
<dbReference type="PDBsum" id="5NMH"/>
<dbReference type="PDBsum" id="5NMK"/>
<dbReference type="PDBsum" id="6CPL"/>
<dbReference type="PDBsum" id="6CPN"/>
<dbReference type="PDBsum" id="6CPO"/>
<dbReference type="PDBsum" id="6CQJ"/>
<dbReference type="PDBsum" id="6CQL"/>
<dbReference type="PDBsum" id="6CQN"/>
<dbReference type="PDBsum" id="6CQQ"/>
<dbReference type="PDBsum" id="6CQR"/>
<dbReference type="PDBsum" id="6EC2"/>
<dbReference type="PDBsum" id="6ECN"/>
<dbReference type="PDBsum" id="6ECO"/>
<dbReference type="PDBsum" id="6N3J"/>
<dbReference type="PDBsum" id="6N3U"/>
<dbReference type="PDBsum" id="6ZDJ"/>
<dbReference type="PDBsum" id="7ASH"/>
<dbReference type="PDBsum" id="7ASL"/>
<dbReference type="PDBsum" id="7WJ2"/>
<dbReference type="PDBsum" id="9CWV"/>
<dbReference type="PDBsum" id="9D6C"/>
<dbReference type="PDBsum" id="9DWD"/>
<dbReference type="BMRB" id="P04591"/>
<dbReference type="EMDB" id="EMD-45975"/>
<dbReference type="EMDB" id="EMD-46593"/>
<dbReference type="EMDB" id="EMD-47240"/>
<dbReference type="SMR" id="P04591"/>
<dbReference type="BioGRID" id="1205537">
    <property type="interactions" value="197"/>
</dbReference>
<dbReference type="ELM" id="P04591"/>
<dbReference type="IntAct" id="P04591">
    <property type="interactions" value="48"/>
</dbReference>
<dbReference type="MEROPS" id="A02.001"/>
<dbReference type="GeneID" id="155030"/>
<dbReference type="KEGG" id="vg:155030"/>
<dbReference type="Reactome" id="R-HSA-162585">
    <property type="pathway name" value="Uncoating of the HIV Virion"/>
</dbReference>
<dbReference type="Reactome" id="R-HSA-162588">
    <property type="pathway name" value="Budding and maturation of HIV virion"/>
</dbReference>
<dbReference type="Reactome" id="R-HSA-162592">
    <property type="pathway name" value="Integration of provirus"/>
</dbReference>
<dbReference type="Reactome" id="R-HSA-162594">
    <property type="pathway name" value="Early Phase of HIV Life Cycle"/>
</dbReference>
<dbReference type="Reactome" id="R-HSA-164516">
    <property type="pathway name" value="Minus-strand DNA synthesis"/>
</dbReference>
<dbReference type="Reactome" id="R-HSA-164525">
    <property type="pathway name" value="Plus-strand DNA synthesis"/>
</dbReference>
<dbReference type="Reactome" id="R-HSA-164843">
    <property type="pathway name" value="2-LTR circle formation"/>
</dbReference>
<dbReference type="Reactome" id="R-HSA-173107">
    <property type="pathway name" value="Binding and entry of HIV virion"/>
</dbReference>
<dbReference type="Reactome" id="R-HSA-174490">
    <property type="pathway name" value="Membrane binding and targetting of GAG proteins"/>
</dbReference>
<dbReference type="Reactome" id="R-HSA-174495">
    <property type="pathway name" value="Synthesis And Processing Of GAG, GAGPOL Polyproteins"/>
</dbReference>
<dbReference type="Reactome" id="R-HSA-175474">
    <property type="pathway name" value="Assembly Of The HIV Virion"/>
</dbReference>
<dbReference type="Reactome" id="R-HSA-175567">
    <property type="pathway name" value="Integration of viral DNA into host genomic DNA"/>
</dbReference>
<dbReference type="Reactome" id="R-HSA-177539">
    <property type="pathway name" value="Autointegration results in viral DNA circles"/>
</dbReference>
<dbReference type="Reactome" id="R-HSA-180689">
    <property type="pathway name" value="APOBEC3G mediated resistance to HIV-1 infection"/>
</dbReference>
<dbReference type="Reactome" id="R-HSA-180910">
    <property type="pathway name" value="Vpr-mediated nuclear import of PICs"/>
</dbReference>
<dbReference type="CD-CODE" id="40C311B2">
    <property type="entry name" value="Stress granule"/>
</dbReference>
<dbReference type="EvolutionaryTrace" id="P04591"/>
<dbReference type="PRO" id="PR:P04591"/>
<dbReference type="Proteomes" id="UP000002241">
    <property type="component" value="Segment"/>
</dbReference>
<dbReference type="GO" id="GO:0044200">
    <property type="term" value="C:host cell nuclear membrane"/>
    <property type="evidence" value="ECO:0000314"/>
    <property type="project" value="CACAO"/>
</dbReference>
<dbReference type="GO" id="GO:0020002">
    <property type="term" value="C:host cell plasma membrane"/>
    <property type="evidence" value="ECO:0007669"/>
    <property type="project" value="UniProtKB-SubCell"/>
</dbReference>
<dbReference type="GO" id="GO:0018995">
    <property type="term" value="C:host cellular component"/>
    <property type="evidence" value="ECO:0000314"/>
    <property type="project" value="CACAO"/>
</dbReference>
<dbReference type="GO" id="GO:0072494">
    <property type="term" value="C:host multivesicular body"/>
    <property type="evidence" value="ECO:0007669"/>
    <property type="project" value="UniProtKB-SubCell"/>
</dbReference>
<dbReference type="GO" id="GO:0016020">
    <property type="term" value="C:membrane"/>
    <property type="evidence" value="ECO:0007669"/>
    <property type="project" value="UniProtKB-KW"/>
</dbReference>
<dbReference type="GO" id="GO:0019013">
    <property type="term" value="C:viral nucleocapsid"/>
    <property type="evidence" value="ECO:0007669"/>
    <property type="project" value="UniProtKB-KW"/>
</dbReference>
<dbReference type="GO" id="GO:0055036">
    <property type="term" value="C:virion membrane"/>
    <property type="evidence" value="ECO:0007669"/>
    <property type="project" value="UniProtKB-SubCell"/>
</dbReference>
<dbReference type="GO" id="GO:0003723">
    <property type="term" value="F:RNA binding"/>
    <property type="evidence" value="ECO:0007669"/>
    <property type="project" value="UniProtKB-KW"/>
</dbReference>
<dbReference type="GO" id="GO:0005198">
    <property type="term" value="F:structural molecule activity"/>
    <property type="evidence" value="ECO:0007669"/>
    <property type="project" value="InterPro"/>
</dbReference>
<dbReference type="GO" id="GO:0008270">
    <property type="term" value="F:zinc ion binding"/>
    <property type="evidence" value="ECO:0007669"/>
    <property type="project" value="UniProtKB-KW"/>
</dbReference>
<dbReference type="GO" id="GO:0039702">
    <property type="term" value="P:viral budding via host ESCRT complex"/>
    <property type="evidence" value="ECO:0000314"/>
    <property type="project" value="UniProtKB"/>
</dbReference>
<dbReference type="GO" id="GO:0075523">
    <property type="term" value="P:viral translational frameshifting"/>
    <property type="evidence" value="ECO:0007669"/>
    <property type="project" value="UniProtKB-KW"/>
</dbReference>
<dbReference type="FunFam" id="1.10.1200.30:FF:000001">
    <property type="entry name" value="Gag polyprotein"/>
    <property type="match status" value="1"/>
</dbReference>
<dbReference type="FunFam" id="1.10.150.90:FF:000001">
    <property type="entry name" value="Gag polyprotein"/>
    <property type="match status" value="1"/>
</dbReference>
<dbReference type="FunFam" id="1.10.375.10:FF:000001">
    <property type="entry name" value="Gag polyprotein"/>
    <property type="match status" value="1"/>
</dbReference>
<dbReference type="FunFam" id="1.20.5.760:FF:000001">
    <property type="entry name" value="Gag polyprotein"/>
    <property type="match status" value="1"/>
</dbReference>
<dbReference type="FunFam" id="4.10.60.10:FF:000001">
    <property type="entry name" value="Gag polyprotein"/>
    <property type="match status" value="1"/>
</dbReference>
<dbReference type="Gene3D" id="1.10.1200.30">
    <property type="match status" value="1"/>
</dbReference>
<dbReference type="Gene3D" id="6.10.250.390">
    <property type="match status" value="1"/>
</dbReference>
<dbReference type="Gene3D" id="1.10.375.10">
    <property type="entry name" value="Human Immunodeficiency Virus Type 1 Capsid Protein"/>
    <property type="match status" value="1"/>
</dbReference>
<dbReference type="Gene3D" id="1.10.150.90">
    <property type="entry name" value="Immunodeficiency lentiviruses, gag gene matrix protein p17"/>
    <property type="match status" value="1"/>
</dbReference>
<dbReference type="Gene3D" id="1.20.5.760">
    <property type="entry name" value="Single helix bin"/>
    <property type="match status" value="1"/>
</dbReference>
<dbReference type="Gene3D" id="4.10.60.10">
    <property type="entry name" value="Zinc finger, CCHC-type"/>
    <property type="match status" value="1"/>
</dbReference>
<dbReference type="InterPro" id="IPR045345">
    <property type="entry name" value="Gag_p24_C"/>
</dbReference>
<dbReference type="InterPro" id="IPR014817">
    <property type="entry name" value="Gag_p6"/>
</dbReference>
<dbReference type="InterPro" id="IPR000071">
    <property type="entry name" value="Lentvrl_matrix_N"/>
</dbReference>
<dbReference type="InterPro" id="IPR012344">
    <property type="entry name" value="Matrix_HIV/RSV_N"/>
</dbReference>
<dbReference type="InterPro" id="IPR050195">
    <property type="entry name" value="Primate_lentivir_Gag_pol-like"/>
</dbReference>
<dbReference type="InterPro" id="IPR008916">
    <property type="entry name" value="Retrov_capsid_C"/>
</dbReference>
<dbReference type="InterPro" id="IPR008919">
    <property type="entry name" value="Retrov_capsid_N"/>
</dbReference>
<dbReference type="InterPro" id="IPR010999">
    <property type="entry name" value="Retrovr_matrix"/>
</dbReference>
<dbReference type="InterPro" id="IPR001878">
    <property type="entry name" value="Znf_CCHC"/>
</dbReference>
<dbReference type="InterPro" id="IPR036875">
    <property type="entry name" value="Znf_CCHC_sf"/>
</dbReference>
<dbReference type="PANTHER" id="PTHR40389:SF4">
    <property type="match status" value="1"/>
</dbReference>
<dbReference type="PANTHER" id="PTHR40389">
    <property type="entry name" value="ENDOGENOUS RETROVIRUS GROUP K MEMBER 24 GAG POLYPROTEIN-RELATED"/>
    <property type="match status" value="1"/>
</dbReference>
<dbReference type="Pfam" id="PF00540">
    <property type="entry name" value="Gag_p17"/>
    <property type="match status" value="1"/>
</dbReference>
<dbReference type="Pfam" id="PF00607">
    <property type="entry name" value="Gag_p24"/>
    <property type="match status" value="1"/>
</dbReference>
<dbReference type="Pfam" id="PF19317">
    <property type="entry name" value="Gag_p24_C"/>
    <property type="match status" value="1"/>
</dbReference>
<dbReference type="Pfam" id="PF08705">
    <property type="entry name" value="Gag_p6"/>
    <property type="match status" value="1"/>
</dbReference>
<dbReference type="Pfam" id="PF00098">
    <property type="entry name" value="zf-CCHC"/>
    <property type="match status" value="2"/>
</dbReference>
<dbReference type="PRINTS" id="PR00234">
    <property type="entry name" value="HIV1MATRIX"/>
</dbReference>
<dbReference type="SMART" id="SM00343">
    <property type="entry name" value="ZnF_C2HC"/>
    <property type="match status" value="2"/>
</dbReference>
<dbReference type="SUPFAM" id="SSF47836">
    <property type="entry name" value="Retroviral matrix proteins"/>
    <property type="match status" value="1"/>
</dbReference>
<dbReference type="SUPFAM" id="SSF47353">
    <property type="entry name" value="Retrovirus capsid dimerization domain-like"/>
    <property type="match status" value="1"/>
</dbReference>
<dbReference type="SUPFAM" id="SSF47943">
    <property type="entry name" value="Retrovirus capsid protein, N-terminal core domain"/>
    <property type="match status" value="1"/>
</dbReference>
<dbReference type="SUPFAM" id="SSF57756">
    <property type="entry name" value="Retrovirus zinc finger-like domains"/>
    <property type="match status" value="1"/>
</dbReference>
<dbReference type="PROSITE" id="PS50158">
    <property type="entry name" value="ZF_CCHC"/>
    <property type="match status" value="2"/>
</dbReference>
<protein>
    <recommendedName>
        <fullName>Gag polyprotein</fullName>
    </recommendedName>
    <alternativeName>
        <fullName>Pr55Gag</fullName>
    </alternativeName>
    <component>
        <recommendedName>
            <fullName>Matrix protein p17</fullName>
            <shortName>MA</shortName>
        </recommendedName>
    </component>
    <component>
        <recommendedName>
            <fullName>Capsid protein p24</fullName>
            <shortName>CA</shortName>
        </recommendedName>
    </component>
    <component>
        <recommendedName>
            <fullName evidence="5">Spacer peptide 1</fullName>
            <shortName>SP1</shortName>
        </recommendedName>
        <alternativeName>
            <fullName>p2</fullName>
        </alternativeName>
    </component>
    <component>
        <recommendedName>
            <fullName>Nucleocapsid protein p7</fullName>
            <shortName>NC</shortName>
        </recommendedName>
    </component>
    <component>
        <recommendedName>
            <fullName evidence="5">Spacer peptide 2</fullName>
            <shortName>SP2</shortName>
        </recommendedName>
        <alternativeName>
            <fullName>p1</fullName>
        </alternativeName>
    </component>
    <component>
        <recommendedName>
            <fullName>p6-gag</fullName>
        </recommendedName>
    </component>
</protein>
<evidence type="ECO:0000250" key="1"/>
<evidence type="ECO:0000250" key="2">
    <source>
        <dbReference type="UniProtKB" id="P03347"/>
    </source>
</evidence>
<evidence type="ECO:0000250" key="3">
    <source>
        <dbReference type="UniProtKB" id="P03348"/>
    </source>
</evidence>
<evidence type="ECO:0000250" key="4">
    <source>
        <dbReference type="UniProtKB" id="P03349"/>
    </source>
</evidence>
<evidence type="ECO:0000250" key="5">
    <source>
        <dbReference type="UniProtKB" id="P12493"/>
    </source>
</evidence>
<evidence type="ECO:0000250" key="6">
    <source>
        <dbReference type="UniProtKB" id="P12497"/>
    </source>
</evidence>
<evidence type="ECO:0000255" key="7">
    <source>
        <dbReference type="PROSITE-ProRule" id="PRU00047"/>
    </source>
</evidence>
<evidence type="ECO:0000256" key="8">
    <source>
        <dbReference type="SAM" id="MobiDB-lite"/>
    </source>
</evidence>
<evidence type="ECO:0000269" key="9">
    <source>
    </source>
</evidence>
<evidence type="ECO:0000269" key="10">
    <source>
    </source>
</evidence>
<evidence type="ECO:0000269" key="11">
    <source>
    </source>
</evidence>
<evidence type="ECO:0000269" key="12">
    <source>
    </source>
</evidence>
<evidence type="ECO:0000269" key="13">
    <source>
    </source>
</evidence>
<evidence type="ECO:0000269" key="14">
    <source>
    </source>
</evidence>
<evidence type="ECO:0000269" key="15">
    <source>
    </source>
</evidence>
<evidence type="ECO:0000269" key="16">
    <source>
    </source>
</evidence>
<evidence type="ECO:0000269" key="17">
    <source>
    </source>
</evidence>
<evidence type="ECO:0000269" key="18">
    <source>
    </source>
</evidence>
<evidence type="ECO:0000269" key="19">
    <source>
    </source>
</evidence>
<evidence type="ECO:0000269" key="20">
    <source>
    </source>
</evidence>
<evidence type="ECO:0000269" key="21">
    <source>
    </source>
</evidence>
<evidence type="ECO:0000269" key="22">
    <source>
    </source>
</evidence>
<evidence type="ECO:0000269" key="23">
    <source>
    </source>
</evidence>
<evidence type="ECO:0000269" key="24">
    <source>
    </source>
</evidence>
<evidence type="ECO:0000269" key="25">
    <source>
    </source>
</evidence>
<evidence type="ECO:0000269" key="26">
    <source>
    </source>
</evidence>
<evidence type="ECO:0000269" key="27">
    <source>
    </source>
</evidence>
<evidence type="ECO:0000269" key="28">
    <source>
    </source>
</evidence>
<evidence type="ECO:0000269" key="29">
    <source>
    </source>
</evidence>
<evidence type="ECO:0000305" key="30"/>
<evidence type="ECO:0007829" key="31">
    <source>
        <dbReference type="PDB" id="9D6C"/>
    </source>
</evidence>